<dbReference type="EC" id="3.6.4.12"/>
<dbReference type="EMBL" id="CM000136">
    <property type="protein sequence ID" value="EEC68174.1"/>
    <property type="molecule type" value="Genomic_DNA"/>
</dbReference>
<dbReference type="SMR" id="B8BKI8"/>
<dbReference type="STRING" id="39946.B8BKI8"/>
<dbReference type="EnsemblPlants" id="BGIOSGA035270-TA">
    <property type="protein sequence ID" value="BGIOSGA035270-PA"/>
    <property type="gene ID" value="BGIOSGA035270"/>
</dbReference>
<dbReference type="EnsemblPlants" id="OsGoSa_11g0013880.01">
    <property type="protein sequence ID" value="OsGoSa_11g0013880.01"/>
    <property type="gene ID" value="OsGoSa_11g0013880"/>
</dbReference>
<dbReference type="EnsemblPlants" id="OsIR64_11g0014320.01">
    <property type="protein sequence ID" value="OsIR64_11g0014320.01"/>
    <property type="gene ID" value="OsIR64_11g0014320"/>
</dbReference>
<dbReference type="EnsemblPlants" id="OsLima_Ung0004740.01">
    <property type="protein sequence ID" value="OsLima_Ung0004740.01"/>
    <property type="gene ID" value="OsLima_Ung0004740"/>
</dbReference>
<dbReference type="Gramene" id="BGIOSGA035270-TA">
    <property type="protein sequence ID" value="BGIOSGA035270-PA"/>
    <property type="gene ID" value="BGIOSGA035270"/>
</dbReference>
<dbReference type="Gramene" id="OsGoSa_11g0013880.01">
    <property type="protein sequence ID" value="OsGoSa_11g0013880.01"/>
    <property type="gene ID" value="OsGoSa_11g0013880"/>
</dbReference>
<dbReference type="Gramene" id="OsIR64_11g0014320.01">
    <property type="protein sequence ID" value="OsIR64_11g0014320.01"/>
    <property type="gene ID" value="OsIR64_11g0014320"/>
</dbReference>
<dbReference type="Gramene" id="OsLima_Ung0004740.01">
    <property type="protein sequence ID" value="OsLima_Ung0004740.01"/>
    <property type="gene ID" value="OsLima_Ung0004740"/>
</dbReference>
<dbReference type="HOGENOM" id="CLU_000995_0_1_1"/>
<dbReference type="OMA" id="TYERVTT"/>
<dbReference type="OrthoDB" id="844at2759"/>
<dbReference type="Proteomes" id="UP000007015">
    <property type="component" value="Chromosome 11"/>
</dbReference>
<dbReference type="GO" id="GO:0000785">
    <property type="term" value="C:chromatin"/>
    <property type="evidence" value="ECO:0007669"/>
    <property type="project" value="EnsemblPlants"/>
</dbReference>
<dbReference type="GO" id="GO:0042555">
    <property type="term" value="C:MCM complex"/>
    <property type="evidence" value="ECO:0007669"/>
    <property type="project" value="InterPro"/>
</dbReference>
<dbReference type="GO" id="GO:0000347">
    <property type="term" value="C:THO complex"/>
    <property type="evidence" value="ECO:0007669"/>
    <property type="project" value="EnsemblPlants"/>
</dbReference>
<dbReference type="GO" id="GO:0043138">
    <property type="term" value="F:3'-5' DNA helicase activity"/>
    <property type="evidence" value="ECO:0007669"/>
    <property type="project" value="TreeGrafter"/>
</dbReference>
<dbReference type="GO" id="GO:0005524">
    <property type="term" value="F:ATP binding"/>
    <property type="evidence" value="ECO:0007669"/>
    <property type="project" value="UniProtKB-KW"/>
</dbReference>
<dbReference type="GO" id="GO:0016887">
    <property type="term" value="F:ATP hydrolysis activity"/>
    <property type="evidence" value="ECO:0007669"/>
    <property type="project" value="RHEA"/>
</dbReference>
<dbReference type="GO" id="GO:0003697">
    <property type="term" value="F:single-stranded DNA binding"/>
    <property type="evidence" value="ECO:0007669"/>
    <property type="project" value="TreeGrafter"/>
</dbReference>
<dbReference type="GO" id="GO:0017116">
    <property type="term" value="F:single-stranded DNA helicase activity"/>
    <property type="evidence" value="ECO:0007669"/>
    <property type="project" value="TreeGrafter"/>
</dbReference>
<dbReference type="GO" id="GO:0008270">
    <property type="term" value="F:zinc ion binding"/>
    <property type="evidence" value="ECO:0007669"/>
    <property type="project" value="UniProtKB-KW"/>
</dbReference>
<dbReference type="GO" id="GO:0000727">
    <property type="term" value="P:double-strand break repair via break-induced replication"/>
    <property type="evidence" value="ECO:0007669"/>
    <property type="project" value="TreeGrafter"/>
</dbReference>
<dbReference type="GO" id="GO:0009793">
    <property type="term" value="P:embryo development ending in seed dormancy"/>
    <property type="evidence" value="ECO:0007669"/>
    <property type="project" value="EnsemblPlants"/>
</dbReference>
<dbReference type="GO" id="GO:1902975">
    <property type="term" value="P:mitotic DNA replication initiation"/>
    <property type="evidence" value="ECO:0007669"/>
    <property type="project" value="TreeGrafter"/>
</dbReference>
<dbReference type="GO" id="GO:0042127">
    <property type="term" value="P:regulation of cell population proliferation"/>
    <property type="evidence" value="ECO:0007669"/>
    <property type="project" value="EnsemblPlants"/>
</dbReference>
<dbReference type="GO" id="GO:0010082">
    <property type="term" value="P:regulation of root meristem growth"/>
    <property type="evidence" value="ECO:0007669"/>
    <property type="project" value="EnsemblPlants"/>
</dbReference>
<dbReference type="CDD" id="cd17753">
    <property type="entry name" value="MCM2"/>
    <property type="match status" value="1"/>
</dbReference>
<dbReference type="FunFam" id="2.20.28.10:FF:000002">
    <property type="entry name" value="DNA helicase"/>
    <property type="match status" value="1"/>
</dbReference>
<dbReference type="FunFam" id="3.30.1640.10:FF:000008">
    <property type="entry name" value="DNA helicase"/>
    <property type="match status" value="1"/>
</dbReference>
<dbReference type="FunFam" id="3.40.50.300:FF:000138">
    <property type="entry name" value="DNA helicase"/>
    <property type="match status" value="1"/>
</dbReference>
<dbReference type="Gene3D" id="2.20.28.10">
    <property type="match status" value="1"/>
</dbReference>
<dbReference type="Gene3D" id="3.30.1640.10">
    <property type="entry name" value="mini-chromosome maintenance (MCM) complex, chain A, domain 1"/>
    <property type="match status" value="1"/>
</dbReference>
<dbReference type="Gene3D" id="2.40.50.140">
    <property type="entry name" value="Nucleic acid-binding proteins"/>
    <property type="match status" value="1"/>
</dbReference>
<dbReference type="Gene3D" id="3.40.50.300">
    <property type="entry name" value="P-loop containing nucleotide triphosphate hydrolases"/>
    <property type="match status" value="1"/>
</dbReference>
<dbReference type="InterPro" id="IPR031327">
    <property type="entry name" value="MCM"/>
</dbReference>
<dbReference type="InterPro" id="IPR008045">
    <property type="entry name" value="MCM2"/>
</dbReference>
<dbReference type="InterPro" id="IPR018525">
    <property type="entry name" value="MCM_CS"/>
</dbReference>
<dbReference type="InterPro" id="IPR001208">
    <property type="entry name" value="MCM_dom"/>
</dbReference>
<dbReference type="InterPro" id="IPR041562">
    <property type="entry name" value="MCM_lid"/>
</dbReference>
<dbReference type="InterPro" id="IPR027925">
    <property type="entry name" value="MCM_N"/>
</dbReference>
<dbReference type="InterPro" id="IPR033762">
    <property type="entry name" value="MCM_OB"/>
</dbReference>
<dbReference type="InterPro" id="IPR012340">
    <property type="entry name" value="NA-bd_OB-fold"/>
</dbReference>
<dbReference type="InterPro" id="IPR027417">
    <property type="entry name" value="P-loop_NTPase"/>
</dbReference>
<dbReference type="PANTHER" id="PTHR11630">
    <property type="entry name" value="DNA REPLICATION LICENSING FACTOR MCM FAMILY MEMBER"/>
    <property type="match status" value="1"/>
</dbReference>
<dbReference type="PANTHER" id="PTHR11630:SF44">
    <property type="entry name" value="DNA REPLICATION LICENSING FACTOR MCM2"/>
    <property type="match status" value="1"/>
</dbReference>
<dbReference type="Pfam" id="PF00493">
    <property type="entry name" value="MCM"/>
    <property type="match status" value="1"/>
</dbReference>
<dbReference type="Pfam" id="PF12619">
    <property type="entry name" value="MCM2_N"/>
    <property type="match status" value="1"/>
</dbReference>
<dbReference type="Pfam" id="PF17855">
    <property type="entry name" value="MCM_lid"/>
    <property type="match status" value="1"/>
</dbReference>
<dbReference type="Pfam" id="PF14551">
    <property type="entry name" value="MCM_N"/>
    <property type="match status" value="1"/>
</dbReference>
<dbReference type="Pfam" id="PF17207">
    <property type="entry name" value="MCM_OB"/>
    <property type="match status" value="1"/>
</dbReference>
<dbReference type="Pfam" id="PF23669">
    <property type="entry name" value="WH_MCM2"/>
    <property type="match status" value="1"/>
</dbReference>
<dbReference type="PRINTS" id="PR01657">
    <property type="entry name" value="MCMFAMILY"/>
</dbReference>
<dbReference type="PRINTS" id="PR01658">
    <property type="entry name" value="MCMPROTEIN2"/>
</dbReference>
<dbReference type="SMART" id="SM00350">
    <property type="entry name" value="MCM"/>
    <property type="match status" value="1"/>
</dbReference>
<dbReference type="SUPFAM" id="SSF50249">
    <property type="entry name" value="Nucleic acid-binding proteins"/>
    <property type="match status" value="1"/>
</dbReference>
<dbReference type="SUPFAM" id="SSF52540">
    <property type="entry name" value="P-loop containing nucleoside triphosphate hydrolases"/>
    <property type="match status" value="1"/>
</dbReference>
<dbReference type="PROSITE" id="PS00847">
    <property type="entry name" value="MCM_1"/>
    <property type="match status" value="1"/>
</dbReference>
<dbReference type="PROSITE" id="PS50051">
    <property type="entry name" value="MCM_2"/>
    <property type="match status" value="1"/>
</dbReference>
<evidence type="ECO:0000250" key="1"/>
<evidence type="ECO:0000255" key="2"/>
<evidence type="ECO:0000256" key="3">
    <source>
        <dbReference type="SAM" id="MobiDB-lite"/>
    </source>
</evidence>
<evidence type="ECO:0000305" key="4"/>
<proteinExistence type="inferred from homology"/>
<feature type="chain" id="PRO_0000425988" description="DNA replication licensing factor MCM2">
    <location>
        <begin position="1"/>
        <end position="961"/>
    </location>
</feature>
<feature type="domain" description="MCM">
    <location>
        <begin position="524"/>
        <end position="730"/>
    </location>
</feature>
<feature type="zinc finger region" description="C4-type" evidence="2">
    <location>
        <begin position="380"/>
        <end position="406"/>
    </location>
</feature>
<feature type="region of interest" description="Disordered" evidence="3">
    <location>
        <begin position="1"/>
        <end position="81"/>
    </location>
</feature>
<feature type="region of interest" description="Disordered" evidence="3">
    <location>
        <begin position="120"/>
        <end position="220"/>
    </location>
</feature>
<feature type="short sequence motif" description="Arginine finger">
    <location>
        <begin position="706"/>
        <end position="709"/>
    </location>
</feature>
<feature type="compositionally biased region" description="Polar residues" evidence="3">
    <location>
        <begin position="1"/>
        <end position="17"/>
    </location>
</feature>
<feature type="compositionally biased region" description="Acidic residues" evidence="3">
    <location>
        <begin position="39"/>
        <end position="78"/>
    </location>
</feature>
<feature type="compositionally biased region" description="Basic and acidic residues" evidence="3">
    <location>
        <begin position="120"/>
        <end position="146"/>
    </location>
</feature>
<feature type="compositionally biased region" description="Basic and acidic residues" evidence="3">
    <location>
        <begin position="166"/>
        <end position="176"/>
    </location>
</feature>
<feature type="compositionally biased region" description="Acidic residues" evidence="3">
    <location>
        <begin position="205"/>
        <end position="220"/>
    </location>
</feature>
<feature type="binding site" evidence="1">
    <location>
        <begin position="574"/>
        <end position="581"/>
    </location>
    <ligand>
        <name>ATP</name>
        <dbReference type="ChEBI" id="CHEBI:30616"/>
    </ligand>
</feature>
<sequence>MDDSENNAPSTPGSPGFSTDRLPPNTTTSRGATDPSSYSDDDDDDVVGAEEAEVDPNVLPEDDGVVAAEEEEDGEDLFNDNYLDDYRRMDEQDQYESVGLDDSIEDERNLDEIMADRRAAEAELDARDVRTGAAPDRKLPRMLHDQDTDEDMSFRRPKRHRANFRPPREPRTPRSDDDGDGATPSSPGRSQRGMYSGGDVPMTDQTDDDPYEDEFDEEDEMNMYRVQGTLREWVTRDEVRRFIAKKFKEFLLTYVNPKNEQGEFEYVRLINEMVLANKCSLEIDYKQFIYIHPNIAIWLADAPQSVIEVMEEVAKNVVFDLHKNYRNIHQKIYVRITNLPVYDQIRNIRQIHLNTMIRIGGVVTRRSGVFPQLQQVKYDCSKCGTVLGPFFQNSYTEVKVGSCPECQSKGPFTINVEQTIYRNYQKLTLQESPGIVPAGRLPRYKEVILLNDLIDCARPGEEIEVTGIYTNNFDLSLNTKNGFPVFATVVEANYVAKKQDLFSAYKLTDEDKAEIEKLAKDPRIGERIVKSIAPSIYGHEDIKTAIALAMFGGQEKNVKGKHRLRGDINVLLLGDPGTAKSQFLKYVEKTGHRAVYTTGKGASAVGLTAAVHKDPVTREWTLEGGALVLADRGICLIDEFDKMNDQDRVSIHEAMEQQSISISKAGIVTSLQARCSVIAAANPIGGRYDSSKTFTQNVELTDPIISRFDVLCVVKDIVDPFTDEMLARFVVDSHARSQPKGANLEDRVPTDVEDDPLAAARQADPDILSQDMLKKYITYAKLNVFPKIHDADLDKISHVYAELRRESSHGQGVPIAVRHIESIIRMSEAHARMHLRSYVSQEDVDMAIRVLLDSFISTQKFGVQKALQKNFRKYMTYKKDYNELLLLLLRTLVKDVLHFEEIVSGPTTRLTHIEVKVEDLKNKAQEYEIYDLRPFFSSAHFRDNNFVLDEGRGIIRHPLAA</sequence>
<name>MCM2_ORYSI</name>
<gene>
    <name type="ORF">OsI_36121</name>
</gene>
<keyword id="KW-0067">ATP-binding</keyword>
<keyword id="KW-0131">Cell cycle</keyword>
<keyword id="KW-0235">DNA replication</keyword>
<keyword id="KW-0238">DNA-binding</keyword>
<keyword id="KW-0347">Helicase</keyword>
<keyword id="KW-0378">Hydrolase</keyword>
<keyword id="KW-0479">Metal-binding</keyword>
<keyword id="KW-0547">Nucleotide-binding</keyword>
<keyword id="KW-0539">Nucleus</keyword>
<keyword id="KW-1185">Reference proteome</keyword>
<keyword id="KW-0862">Zinc</keyword>
<keyword id="KW-0863">Zinc-finger</keyword>
<accession>B8BKI8</accession>
<reference key="1">
    <citation type="journal article" date="2005" name="PLoS Biol.">
        <title>The genomes of Oryza sativa: a history of duplications.</title>
        <authorList>
            <person name="Yu J."/>
            <person name="Wang J."/>
            <person name="Lin W."/>
            <person name="Li S."/>
            <person name="Li H."/>
            <person name="Zhou J."/>
            <person name="Ni P."/>
            <person name="Dong W."/>
            <person name="Hu S."/>
            <person name="Zeng C."/>
            <person name="Zhang J."/>
            <person name="Zhang Y."/>
            <person name="Li R."/>
            <person name="Xu Z."/>
            <person name="Li S."/>
            <person name="Li X."/>
            <person name="Zheng H."/>
            <person name="Cong L."/>
            <person name="Lin L."/>
            <person name="Yin J."/>
            <person name="Geng J."/>
            <person name="Li G."/>
            <person name="Shi J."/>
            <person name="Liu J."/>
            <person name="Lv H."/>
            <person name="Li J."/>
            <person name="Wang J."/>
            <person name="Deng Y."/>
            <person name="Ran L."/>
            <person name="Shi X."/>
            <person name="Wang X."/>
            <person name="Wu Q."/>
            <person name="Li C."/>
            <person name="Ren X."/>
            <person name="Wang J."/>
            <person name="Wang X."/>
            <person name="Li D."/>
            <person name="Liu D."/>
            <person name="Zhang X."/>
            <person name="Ji Z."/>
            <person name="Zhao W."/>
            <person name="Sun Y."/>
            <person name="Zhang Z."/>
            <person name="Bao J."/>
            <person name="Han Y."/>
            <person name="Dong L."/>
            <person name="Ji J."/>
            <person name="Chen P."/>
            <person name="Wu S."/>
            <person name="Liu J."/>
            <person name="Xiao Y."/>
            <person name="Bu D."/>
            <person name="Tan J."/>
            <person name="Yang L."/>
            <person name="Ye C."/>
            <person name="Zhang J."/>
            <person name="Xu J."/>
            <person name="Zhou Y."/>
            <person name="Yu Y."/>
            <person name="Zhang B."/>
            <person name="Zhuang S."/>
            <person name="Wei H."/>
            <person name="Liu B."/>
            <person name="Lei M."/>
            <person name="Yu H."/>
            <person name="Li Y."/>
            <person name="Xu H."/>
            <person name="Wei S."/>
            <person name="He X."/>
            <person name="Fang L."/>
            <person name="Zhang Z."/>
            <person name="Zhang Y."/>
            <person name="Huang X."/>
            <person name="Su Z."/>
            <person name="Tong W."/>
            <person name="Li J."/>
            <person name="Tong Z."/>
            <person name="Li S."/>
            <person name="Ye J."/>
            <person name="Wang L."/>
            <person name="Fang L."/>
            <person name="Lei T."/>
            <person name="Chen C.-S."/>
            <person name="Chen H.-C."/>
            <person name="Xu Z."/>
            <person name="Li H."/>
            <person name="Huang H."/>
            <person name="Zhang F."/>
            <person name="Xu H."/>
            <person name="Li N."/>
            <person name="Zhao C."/>
            <person name="Li S."/>
            <person name="Dong L."/>
            <person name="Huang Y."/>
            <person name="Li L."/>
            <person name="Xi Y."/>
            <person name="Qi Q."/>
            <person name="Li W."/>
            <person name="Zhang B."/>
            <person name="Hu W."/>
            <person name="Zhang Y."/>
            <person name="Tian X."/>
            <person name="Jiao Y."/>
            <person name="Liang X."/>
            <person name="Jin J."/>
            <person name="Gao L."/>
            <person name="Zheng W."/>
            <person name="Hao B."/>
            <person name="Liu S.-M."/>
            <person name="Wang W."/>
            <person name="Yuan L."/>
            <person name="Cao M."/>
            <person name="McDermott J."/>
            <person name="Samudrala R."/>
            <person name="Wang J."/>
            <person name="Wong G.K.-S."/>
            <person name="Yang H."/>
        </authorList>
    </citation>
    <scope>NUCLEOTIDE SEQUENCE [LARGE SCALE GENOMIC DNA]</scope>
    <source>
        <strain>cv. 93-11</strain>
    </source>
</reference>
<comment type="function">
    <text evidence="1">Probable component of the MCM2-7 complex (MCM complex) that may function as a DNA helicase and which is essential to undergo a single round of replication initiation and elongation per cell cycle in eukaryotic cells.</text>
</comment>
<comment type="catalytic activity">
    <reaction>
        <text>ATP + H2O = ADP + phosphate + H(+)</text>
        <dbReference type="Rhea" id="RHEA:13065"/>
        <dbReference type="ChEBI" id="CHEBI:15377"/>
        <dbReference type="ChEBI" id="CHEBI:15378"/>
        <dbReference type="ChEBI" id="CHEBI:30616"/>
        <dbReference type="ChEBI" id="CHEBI:43474"/>
        <dbReference type="ChEBI" id="CHEBI:456216"/>
        <dbReference type="EC" id="3.6.4.12"/>
    </reaction>
</comment>
<comment type="subunit">
    <text evidence="1">Component of the minichromosome maintenance (MCM) complex, a heterotetramer composed of MCM2, MCM3, MCM4, MCM5, MCM6 and MCM7.</text>
</comment>
<comment type="subcellular location">
    <subcellularLocation>
        <location evidence="4">Nucleus</location>
    </subcellularLocation>
</comment>
<comment type="similarity">
    <text evidence="4">Belongs to the MCM family.</text>
</comment>
<organism>
    <name type="scientific">Oryza sativa subsp. indica</name>
    <name type="common">Rice</name>
    <dbReference type="NCBI Taxonomy" id="39946"/>
    <lineage>
        <taxon>Eukaryota</taxon>
        <taxon>Viridiplantae</taxon>
        <taxon>Streptophyta</taxon>
        <taxon>Embryophyta</taxon>
        <taxon>Tracheophyta</taxon>
        <taxon>Spermatophyta</taxon>
        <taxon>Magnoliopsida</taxon>
        <taxon>Liliopsida</taxon>
        <taxon>Poales</taxon>
        <taxon>Poaceae</taxon>
        <taxon>BOP clade</taxon>
        <taxon>Oryzoideae</taxon>
        <taxon>Oryzeae</taxon>
        <taxon>Oryzinae</taxon>
        <taxon>Oryza</taxon>
        <taxon>Oryza sativa</taxon>
    </lineage>
</organism>
<protein>
    <recommendedName>
        <fullName>DNA replication licensing factor MCM2</fullName>
        <ecNumber>3.6.4.12</ecNumber>
    </recommendedName>
    <alternativeName>
        <fullName>Minichromosome maintenance protein 2</fullName>
    </alternativeName>
</protein>